<sequence>MAILSNPQFTPSQQAAVDHDGHDILVSASAGSGKTSVLVARVIQKILKGTDVDTLLVVTFTEAAATEMRQRIQAALRDASEKATEPAVKQRLRQQLSLVPTAQISTLHAFCLKVIKQFYYVIDRDPVFRLLSDTAERLLLADQVWQRVREAFYNHEYVKENEQDTLFYELAQNFSNDRNDDGLTDIVFELLDFANANSNPVKWLNKLPKSYAVDEAGLTASDYFQEKILPILQQTITECLEALQEAEQLSKTSENLMIYAPQIATTQAALTQINADAKTLNWQAWRQQLTDAQLGPAKRTKKLEPDEQINKDRLKADLDDVKKKIQTLLDTYFVFDEATTANIQRQAGQLVQKLVSVTLTFREAFQAEKERRHLLDFSDLEQLCLTILSVEDSPARAFYQQKFSEVLVDEYQDTNPLQETIIQKVTSDHPRNLFMVGDVKQSIYAFRLADPSLFKNKYNEFGVTEAERDSERIILAENFRSRRNIDDFTNLIFKQLMDENLGELDYDENAALQYGARYYPDQHPTAPTELLLYETKPEEAVANPQLDKSEGQVVAVAKRIQAMMTNGEQIWDKKLEKMRPIEYRDIVLLAPTRGNNLFILDYFKRFGLPVVIKDAQNYFQTTEVQIMLALLQVIDNPNQDIPLVSVLRSPIVGLNENELALIRINDKTDDYYQAVFNFIDQYNEQKVGHLGQQVMQKLTHFMALLTSFRTIARQQPIVDLIWTIYQETGFLDYVGGMPAGRQRQANLHALYERATAYEENGFKGLFQFIQFIERLQKQDKDLAQPTSLENQDAISVMTIHGSKGLEFPVVFLIDTSRRFNQQDLQRSYVLDNHGGLGVVYLDSQKRLKVPTLPELAITAQKRKKLRAEEMLKTIRCFDTCGTMVNHRWPL</sequence>
<keyword id="KW-0067">ATP-binding</keyword>
<keyword id="KW-0227">DNA damage</keyword>
<keyword id="KW-0234">DNA repair</keyword>
<keyword id="KW-0238">DNA-binding</keyword>
<keyword id="KW-0269">Exonuclease</keyword>
<keyword id="KW-0347">Helicase</keyword>
<keyword id="KW-0378">Hydrolase</keyword>
<keyword id="KW-0413">Isomerase</keyword>
<keyword id="KW-0540">Nuclease</keyword>
<keyword id="KW-0547">Nucleotide-binding</keyword>
<keyword id="KW-1185">Reference proteome</keyword>
<organism>
    <name type="scientific">Latilactobacillus sakei subsp. sakei (strain 23K)</name>
    <name type="common">Lactobacillus sakei subsp. sakei</name>
    <dbReference type="NCBI Taxonomy" id="314315"/>
    <lineage>
        <taxon>Bacteria</taxon>
        <taxon>Bacillati</taxon>
        <taxon>Bacillota</taxon>
        <taxon>Bacilli</taxon>
        <taxon>Lactobacillales</taxon>
        <taxon>Lactobacillaceae</taxon>
        <taxon>Latilactobacillus</taxon>
    </lineage>
</organism>
<accession>Q38X69</accession>
<proteinExistence type="inferred from homology"/>
<name>ADDA_LATSS</name>
<reference key="1">
    <citation type="journal article" date="2005" name="Nat. Biotechnol.">
        <title>The complete genome sequence of the meat-borne lactic acid bacterium Lactobacillus sakei 23K.</title>
        <authorList>
            <person name="Chaillou S."/>
            <person name="Champomier-Verges M.-C."/>
            <person name="Cornet M."/>
            <person name="Crutz-Le Coq A.-M."/>
            <person name="Dudez A.-M."/>
            <person name="Martin V."/>
            <person name="Beaufils S."/>
            <person name="Darbon-Rongere E."/>
            <person name="Bossy R."/>
            <person name="Loux V."/>
            <person name="Zagorec M."/>
        </authorList>
    </citation>
    <scope>NUCLEOTIDE SEQUENCE [LARGE SCALE GENOMIC DNA]</scope>
    <source>
        <strain>23K</strain>
    </source>
</reference>
<feature type="chain" id="PRO_0000379288" description="ATP-dependent helicase/nuclease subunit A">
    <location>
        <begin position="1"/>
        <end position="890"/>
    </location>
</feature>
<feature type="domain" description="UvrD-like helicase ATP-binding" evidence="2">
    <location>
        <begin position="7"/>
        <end position="482"/>
    </location>
</feature>
<feature type="domain" description="UvrD-like helicase C-terminal" evidence="3">
    <location>
        <begin position="510"/>
        <end position="804"/>
    </location>
</feature>
<feature type="binding site" evidence="2">
    <location>
        <begin position="28"/>
        <end position="35"/>
    </location>
    <ligand>
        <name>ATP</name>
        <dbReference type="ChEBI" id="CHEBI:30616"/>
    </ligand>
</feature>
<protein>
    <recommendedName>
        <fullName>ATP-dependent helicase/nuclease subunit A</fullName>
        <ecNumber>3.1.-.-</ecNumber>
        <ecNumber>5.6.2.4</ecNumber>
    </recommendedName>
    <alternativeName>
        <fullName>ATP-dependent helicase/nuclease AddA</fullName>
    </alternativeName>
    <alternativeName>
        <fullName evidence="4">DNA 3'-5' helicase AddA</fullName>
    </alternativeName>
</protein>
<dbReference type="EC" id="3.1.-.-"/>
<dbReference type="EC" id="5.6.2.4"/>
<dbReference type="EMBL" id="CR936503">
    <property type="protein sequence ID" value="CAI55212.1"/>
    <property type="molecule type" value="Genomic_DNA"/>
</dbReference>
<dbReference type="SMR" id="Q38X69"/>
<dbReference type="STRING" id="314315.LCA_0910"/>
<dbReference type="KEGG" id="lsa:LCA_0910"/>
<dbReference type="eggNOG" id="COG1074">
    <property type="taxonomic scope" value="Bacteria"/>
</dbReference>
<dbReference type="HOGENOM" id="CLU_001114_3_1_9"/>
<dbReference type="Proteomes" id="UP000002707">
    <property type="component" value="Chromosome"/>
</dbReference>
<dbReference type="GO" id="GO:0005829">
    <property type="term" value="C:cytosol"/>
    <property type="evidence" value="ECO:0007669"/>
    <property type="project" value="TreeGrafter"/>
</dbReference>
<dbReference type="GO" id="GO:0033202">
    <property type="term" value="C:DNA helicase complex"/>
    <property type="evidence" value="ECO:0007669"/>
    <property type="project" value="TreeGrafter"/>
</dbReference>
<dbReference type="GO" id="GO:0043138">
    <property type="term" value="F:3'-5' DNA helicase activity"/>
    <property type="evidence" value="ECO:0007669"/>
    <property type="project" value="TreeGrafter"/>
</dbReference>
<dbReference type="GO" id="GO:0005524">
    <property type="term" value="F:ATP binding"/>
    <property type="evidence" value="ECO:0007669"/>
    <property type="project" value="UniProtKB-KW"/>
</dbReference>
<dbReference type="GO" id="GO:0016887">
    <property type="term" value="F:ATP hydrolysis activity"/>
    <property type="evidence" value="ECO:0007669"/>
    <property type="project" value="RHEA"/>
</dbReference>
<dbReference type="GO" id="GO:0003677">
    <property type="term" value="F:DNA binding"/>
    <property type="evidence" value="ECO:0007669"/>
    <property type="project" value="UniProtKB-KW"/>
</dbReference>
<dbReference type="GO" id="GO:0004527">
    <property type="term" value="F:exonuclease activity"/>
    <property type="evidence" value="ECO:0007669"/>
    <property type="project" value="UniProtKB-KW"/>
</dbReference>
<dbReference type="GO" id="GO:0006302">
    <property type="term" value="P:double-strand break repair"/>
    <property type="evidence" value="ECO:0007669"/>
    <property type="project" value="InterPro"/>
</dbReference>
<dbReference type="GO" id="GO:0000725">
    <property type="term" value="P:recombinational repair"/>
    <property type="evidence" value="ECO:0007669"/>
    <property type="project" value="TreeGrafter"/>
</dbReference>
<dbReference type="CDD" id="cd17932">
    <property type="entry name" value="DEXQc_UvrD"/>
    <property type="match status" value="1"/>
</dbReference>
<dbReference type="Gene3D" id="3.40.50.300">
    <property type="entry name" value="P-loop containing nucleotide triphosphate hydrolases"/>
    <property type="match status" value="4"/>
</dbReference>
<dbReference type="InterPro" id="IPR014152">
    <property type="entry name" value="AddA"/>
</dbReference>
<dbReference type="InterPro" id="IPR014017">
    <property type="entry name" value="DNA_helicase_UvrD-like_C"/>
</dbReference>
<dbReference type="InterPro" id="IPR000212">
    <property type="entry name" value="DNA_helicase_UvrD/REP"/>
</dbReference>
<dbReference type="InterPro" id="IPR027417">
    <property type="entry name" value="P-loop_NTPase"/>
</dbReference>
<dbReference type="InterPro" id="IPR014016">
    <property type="entry name" value="UvrD-like_ATP-bd"/>
</dbReference>
<dbReference type="NCBIfam" id="TIGR02785">
    <property type="entry name" value="addA_Gpos"/>
    <property type="match status" value="1"/>
</dbReference>
<dbReference type="PANTHER" id="PTHR11070:SF48">
    <property type="entry name" value="ATP-DEPENDENT HELICASE_NUCLEASE SUBUNIT A"/>
    <property type="match status" value="1"/>
</dbReference>
<dbReference type="PANTHER" id="PTHR11070">
    <property type="entry name" value="UVRD / RECB / PCRA DNA HELICASE FAMILY MEMBER"/>
    <property type="match status" value="1"/>
</dbReference>
<dbReference type="Pfam" id="PF00580">
    <property type="entry name" value="UvrD-helicase"/>
    <property type="match status" value="1"/>
</dbReference>
<dbReference type="Pfam" id="PF13361">
    <property type="entry name" value="UvrD_C"/>
    <property type="match status" value="1"/>
</dbReference>
<dbReference type="SUPFAM" id="SSF52540">
    <property type="entry name" value="P-loop containing nucleoside triphosphate hydrolases"/>
    <property type="match status" value="1"/>
</dbReference>
<dbReference type="PROSITE" id="PS51198">
    <property type="entry name" value="UVRD_HELICASE_ATP_BIND"/>
    <property type="match status" value="1"/>
</dbReference>
<dbReference type="PROSITE" id="PS51217">
    <property type="entry name" value="UVRD_HELICASE_CTER"/>
    <property type="match status" value="1"/>
</dbReference>
<gene>
    <name type="primary">addA</name>
    <name type="synonym">rexAN</name>
    <name type="ordered locus">LCA_0910</name>
</gene>
<evidence type="ECO:0000250" key="1"/>
<evidence type="ECO:0000255" key="2">
    <source>
        <dbReference type="PROSITE-ProRule" id="PRU00560"/>
    </source>
</evidence>
<evidence type="ECO:0000255" key="3">
    <source>
        <dbReference type="PROSITE-ProRule" id="PRU00617"/>
    </source>
</evidence>
<evidence type="ECO:0000305" key="4"/>
<comment type="function">
    <text evidence="1">The heterodimer acts both as an ATP-dependent DNA helicase and as an ATP-dependent, dual-direction single-stranded exonuclease. Recognizes the chi site generating a DNA molecule suitable for the initiation of homologous recombination. The AddA nuclease domain is required for chi fragment generation; this subunit has the helicase and 3' -&gt; 5' nuclease activities (By similarity).</text>
</comment>
<comment type="catalytic activity">
    <reaction>
        <text>Couples ATP hydrolysis with the unwinding of duplex DNA by translocating in the 3'-5' direction.</text>
        <dbReference type="EC" id="5.6.2.4"/>
    </reaction>
</comment>
<comment type="catalytic activity">
    <reaction>
        <text>ATP + H2O = ADP + phosphate + H(+)</text>
        <dbReference type="Rhea" id="RHEA:13065"/>
        <dbReference type="ChEBI" id="CHEBI:15377"/>
        <dbReference type="ChEBI" id="CHEBI:15378"/>
        <dbReference type="ChEBI" id="CHEBI:30616"/>
        <dbReference type="ChEBI" id="CHEBI:43474"/>
        <dbReference type="ChEBI" id="CHEBI:456216"/>
        <dbReference type="EC" id="5.6.2.4"/>
    </reaction>
</comment>
<comment type="cofactor">
    <cofactor evidence="1">
        <name>Mg(2+)</name>
        <dbReference type="ChEBI" id="CHEBI:18420"/>
    </cofactor>
</comment>
<comment type="subunit">
    <text evidence="1">Heterodimer of AddA and AddB/RexB.</text>
</comment>
<comment type="similarity">
    <text evidence="4">Belongs to the helicase family. AddA subfamily.</text>
</comment>
<comment type="caution">
    <text evidence="4">The C-terminus of this sequence has an annotated frameshift; it can be made to better match orthologs upon shifting at position 874.</text>
</comment>